<proteinExistence type="inferred from homology"/>
<name>SPI1_SWPVK</name>
<organism>
    <name type="scientific">Swinepox virus (strain Kasza)</name>
    <name type="common">SWPV</name>
    <dbReference type="NCBI Taxonomy" id="10277"/>
    <lineage>
        <taxon>Viruses</taxon>
        <taxon>Varidnaviria</taxon>
        <taxon>Bamfordvirae</taxon>
        <taxon>Nucleocytoviricota</taxon>
        <taxon>Pokkesviricetes</taxon>
        <taxon>Chitovirales</taxon>
        <taxon>Poxviridae</taxon>
        <taxon>Chordopoxvirinae</taxon>
        <taxon>Suipoxvirus</taxon>
        <taxon>Swinepox virus</taxon>
    </lineage>
</organism>
<dbReference type="EMBL" id="L21931">
    <property type="protein sequence ID" value="AAC37872.1"/>
    <property type="molecule type" value="Genomic_DNA"/>
</dbReference>
<dbReference type="SMR" id="Q08519"/>
<dbReference type="MEROPS" id="I04.077"/>
<dbReference type="GO" id="GO:0005615">
    <property type="term" value="C:extracellular space"/>
    <property type="evidence" value="ECO:0007669"/>
    <property type="project" value="InterPro"/>
</dbReference>
<dbReference type="GO" id="GO:0004867">
    <property type="term" value="F:serine-type endopeptidase inhibitor activity"/>
    <property type="evidence" value="ECO:0007669"/>
    <property type="project" value="UniProtKB-KW"/>
</dbReference>
<dbReference type="CDD" id="cd00172">
    <property type="entry name" value="serpin"/>
    <property type="match status" value="1"/>
</dbReference>
<dbReference type="Gene3D" id="2.30.39.10">
    <property type="entry name" value="Alpha-1-antitrypsin, domain 1"/>
    <property type="match status" value="1"/>
</dbReference>
<dbReference type="Gene3D" id="3.30.497.10">
    <property type="entry name" value="Antithrombin, subunit I, domain 2"/>
    <property type="match status" value="1"/>
</dbReference>
<dbReference type="InterPro" id="IPR023796">
    <property type="entry name" value="Serpin_dom"/>
</dbReference>
<dbReference type="InterPro" id="IPR000215">
    <property type="entry name" value="Serpin_fam"/>
</dbReference>
<dbReference type="InterPro" id="IPR036186">
    <property type="entry name" value="Serpin_sf"/>
</dbReference>
<dbReference type="InterPro" id="IPR042178">
    <property type="entry name" value="Serpin_sf_1"/>
</dbReference>
<dbReference type="InterPro" id="IPR042185">
    <property type="entry name" value="Serpin_sf_2"/>
</dbReference>
<dbReference type="PANTHER" id="PTHR11461">
    <property type="entry name" value="SERINE PROTEASE INHIBITOR, SERPIN"/>
    <property type="match status" value="1"/>
</dbReference>
<dbReference type="PANTHER" id="PTHR11461:SF186">
    <property type="entry name" value="SERPIN B4"/>
    <property type="match status" value="1"/>
</dbReference>
<dbReference type="Pfam" id="PF00079">
    <property type="entry name" value="Serpin"/>
    <property type="match status" value="1"/>
</dbReference>
<dbReference type="SMART" id="SM00093">
    <property type="entry name" value="SERPIN"/>
    <property type="match status" value="1"/>
</dbReference>
<dbReference type="SUPFAM" id="SSF56574">
    <property type="entry name" value="Serpins"/>
    <property type="match status" value="1"/>
</dbReference>
<feature type="chain" id="PRO_0000094141" description="Probable serine proteinase inhibitor 1">
    <location>
        <begin position="1"/>
        <end position="320"/>
    </location>
</feature>
<accession>Q08519</accession>
<protein>
    <recommendedName>
        <fullName>Probable serine proteinase inhibitor 1</fullName>
        <shortName>Serp-1</shortName>
        <shortName>Serpin-1</shortName>
    </recommendedName>
</protein>
<comment type="similarity">
    <text evidence="1">Belongs to the serpin family. Poxviruses subfamily.</text>
</comment>
<organismHost>
    <name type="scientific">Sus scrofa</name>
    <name type="common">Pig</name>
    <dbReference type="NCBI Taxonomy" id="9823"/>
</organismHost>
<gene>
    <name type="primary">SPI-1</name>
    <name type="ORF">K1R</name>
</gene>
<reference key="1">
    <citation type="journal article" date="1993" name="Virology">
        <title>DNA sequence analysis of conserved and unique regions of swinepox virus: identification of genetic elements supporting phenotypic observations including a novel G protein-coupled receptor homologue.</title>
        <authorList>
            <person name="Massung R.F."/>
            <person name="Jayarama V."/>
            <person name="Moyer R.W."/>
        </authorList>
    </citation>
    <scope>NUCLEOTIDE SEQUENCE [GENOMIC DNA]</scope>
</reference>
<evidence type="ECO:0000305" key="1"/>
<keyword id="KW-0646">Protease inhibitor</keyword>
<keyword id="KW-0722">Serine protease inhibitor</keyword>
<sequence>MDVFLKLLQKDGNIVYSPVSISLSIDMIISKKGYIHRPLSPYTNYNEDTISIASRIYGDCNSLNKDPCICMDCIGDMFVLVDFDKNHKDIIDDINKWVSERTNNHIDTIIDNIGDNTKLLIVNAAYFKSSWEDEFIKEYTSIEKFWYNSTEFILVPMMSNKDIYSYGYIKDSDIKIIEIPYKDRRFSMFIPITKVYKTLCNIITIDKLAMWTSTMNLYEVDIKIPRFKVESSYELKDIIGCINMEYYIREGTELNTPSGFRHKSVIEVNEDGTTASASTCCCVADSVSNKEFYAYSPFIFYIKDNTTSDFLFVGKIISPM</sequence>